<evidence type="ECO:0000250" key="1">
    <source>
        <dbReference type="UniProtKB" id="A8PUY1"/>
    </source>
</evidence>
<evidence type="ECO:0000255" key="2"/>
<evidence type="ECO:0000255" key="3">
    <source>
        <dbReference type="PROSITE-ProRule" id="PRU00498"/>
    </source>
</evidence>
<evidence type="ECO:0000255" key="4">
    <source>
        <dbReference type="PROSITE-ProRule" id="PRU10037"/>
    </source>
</evidence>
<evidence type="ECO:0000269" key="5">
    <source>
    </source>
</evidence>
<evidence type="ECO:0000303" key="6">
    <source>
    </source>
</evidence>
<evidence type="ECO:0000305" key="7"/>
<evidence type="ECO:0000305" key="8">
    <source>
    </source>
</evidence>
<proteinExistence type="evidence at protein level"/>
<keyword id="KW-1015">Disulfide bond</keyword>
<keyword id="KW-0325">Glycoprotein</keyword>
<keyword id="KW-0378">Hydrolase</keyword>
<keyword id="KW-0442">Lipid degradation</keyword>
<keyword id="KW-0443">Lipid metabolism</keyword>
<keyword id="KW-0479">Metal-binding</keyword>
<keyword id="KW-1185">Reference proteome</keyword>
<keyword id="KW-0964">Secreted</keyword>
<keyword id="KW-0732">Signal</keyword>
<comment type="function">
    <text evidence="5 8">Secreted lipase involved in Dandruff and seborrheic dermatitis (D/SD) probably via lipase-mediated breakdown of sebaceous lipids and release of irritating free fatty acids (PubMed:26298017). Shows activity against monoglyceride and diglyceride substrates and generates free oleic acid from the substrates mono- and diolein (PubMed:26298017). Able to cleave the oleic acid from both the 1 and the 2 position of the glycerol backbone as 1,2 isomers of diolein were converted into oleic acid and glycerol (PubMed:26298017). Due to an absence of fatty acid synthase genes in Malassezia species, secretory lipases are essential for the yeast to generate free fatty acids from degradation of sebum and assimilate them as lipid sources for growth (Probable). Plays an essential role at the pathogen-host interface during disease progression (Probable). Also performs the reverse reaction to build diacylglycerols from monoacylglycerols (PubMed:26298017).</text>
</comment>
<comment type="catalytic activity">
    <reaction evidence="5">
        <text>a monoacylglycerol + H2O = glycerol + a fatty acid + H(+)</text>
        <dbReference type="Rhea" id="RHEA:15245"/>
        <dbReference type="ChEBI" id="CHEBI:15377"/>
        <dbReference type="ChEBI" id="CHEBI:15378"/>
        <dbReference type="ChEBI" id="CHEBI:17408"/>
        <dbReference type="ChEBI" id="CHEBI:17754"/>
        <dbReference type="ChEBI" id="CHEBI:28868"/>
    </reaction>
</comment>
<comment type="catalytic activity">
    <reaction evidence="5">
        <text>a diacylglycerol + H2O = a monoacylglycerol + a fatty acid + H(+)</text>
        <dbReference type="Rhea" id="RHEA:32731"/>
        <dbReference type="ChEBI" id="CHEBI:15377"/>
        <dbReference type="ChEBI" id="CHEBI:15378"/>
        <dbReference type="ChEBI" id="CHEBI:17408"/>
        <dbReference type="ChEBI" id="CHEBI:18035"/>
        <dbReference type="ChEBI" id="CHEBI:28868"/>
    </reaction>
</comment>
<comment type="subcellular location">
    <subcellularLocation>
        <location evidence="8">Secreted</location>
    </subcellularLocation>
</comment>
<comment type="similarity">
    <text evidence="7">Belongs to the AB hydrolase superfamily. Lipase family. Class 3 subfamily.</text>
</comment>
<comment type="sequence caution" evidence="7">
    <conflict type="erroneous gene model prediction">
        <sequence resource="EMBL-CDS" id="AYO44685"/>
    </conflict>
    <text>The predicted gene DNF11_3735 has been split into 2 genes: LIP2 and SKT5.</text>
</comment>
<organism>
    <name type="scientific">Malassezia restricta (strain ATCC 96810 / NBRC 103918 / CBS 7877)</name>
    <name type="common">Seborrheic dermatitis infection agent</name>
    <dbReference type="NCBI Taxonomy" id="425264"/>
    <lineage>
        <taxon>Eukaryota</taxon>
        <taxon>Fungi</taxon>
        <taxon>Dikarya</taxon>
        <taxon>Basidiomycota</taxon>
        <taxon>Ustilaginomycotina</taxon>
        <taxon>Malasseziomycetes</taxon>
        <taxon>Malasseziales</taxon>
        <taxon>Malasseziaceae</taxon>
        <taxon>Malassezia</taxon>
    </lineage>
</organism>
<protein>
    <recommendedName>
        <fullName evidence="6">Secreted mono- and diacylglycerol lipase LIP2</fullName>
        <ecNumber evidence="5">3.1.1.-</ecNumber>
    </recommendedName>
</protein>
<accession>A0A0K0VF36</accession>
<accession>A0A3G2S9C2</accession>
<accession>P9WEM5</accession>
<name>LIP2_MALR7</name>
<sequence>MACFRVILYLSVIFFVQCVFAAPKGITKVAPENHNFFGRITSYAHPKDVPDPVPMYQQFAALAQQSNCHNYHINISVGDATLLYSWGDNDRNQRLQLFHSKSLGIVASWAGMNPTKINSILGAADVFLVDVDRRYFPHAEKGAKLYKGFQDAYKRVAPTFIKELQYYQELYNEDRVSLTGLSYGAALANIALLHVKKNLKRGSIYRTVAFGLPRVGNQEWANSIDKHADGKFFYVANGNDLVVRAPPRELGYQHPSGQIWINPSNSSNWKFYPGQENVHGANSEFGYSIPDHTGVYFRTEIASLWGHCPATVGKD</sequence>
<reference key="1">
    <citation type="journal article" date="2015" name="FEMS Yeast Res.">
        <title>Identification and characterization of lipases from Malassezia restricta, a causative agent of dandruff.</title>
        <authorList>
            <person name="Sommer B."/>
            <person name="Overy D.P."/>
            <person name="Kerr R.G."/>
        </authorList>
    </citation>
    <scope>NUCLEOTIDE SEQUENCE [GENOMIC DNA]</scope>
    <scope>FUNCTION</scope>
    <scope>CATALYTIC ACTIVITY</scope>
    <source>
        <strain>ATCC 96810 / NBRC 103918 / CBS 7877</strain>
    </source>
</reference>
<reference key="2">
    <citation type="journal article" date="2019" name="Microbiol. Resour. Announc.">
        <title>Complete Genome Sequence of Malassezia restricta CBS 7877, an Opportunist Pathogen Involved in Dandruff and Seborrheic Dermatitis.</title>
        <authorList>
            <person name="Morand S.C."/>
            <person name="Bertignac M."/>
            <person name="Iltis A."/>
            <person name="Kolder I.C.R.M."/>
            <person name="Pirovano W."/>
            <person name="Jourdain R."/>
            <person name="Clavaud C."/>
        </authorList>
    </citation>
    <scope>NUCLEOTIDE SEQUENCE [LARGE SCALE GENOMIC DNA]</scope>
    <source>
        <strain>ATCC 96810 / NBRC 103918 / CBS 7877</strain>
    </source>
</reference>
<dbReference type="EC" id="3.1.1.-" evidence="5"/>
<dbReference type="EMBL" id="KR998251">
    <property type="protein sequence ID" value="AKR75008.1"/>
    <property type="molecule type" value="Genomic_DNA"/>
</dbReference>
<dbReference type="EMBL" id="CP033154">
    <property type="protein sequence ID" value="AYO44685.1"/>
    <property type="status" value="ALT_SEQ"/>
    <property type="molecule type" value="Genomic_DNA"/>
</dbReference>
<dbReference type="SMR" id="A0A0K0VF36"/>
<dbReference type="ESTHER" id="9basi-a0a0k0vf36">
    <property type="family name" value="Lipase_3"/>
</dbReference>
<dbReference type="VEuPathDB" id="FungiDB:DNF11_3735"/>
<dbReference type="VEuPathDB" id="FungiDB:MRET_4032"/>
<dbReference type="Proteomes" id="UP000269793">
    <property type="component" value="Chromosome vii"/>
</dbReference>
<dbReference type="GO" id="GO:0005576">
    <property type="term" value="C:extracellular region"/>
    <property type="evidence" value="ECO:0007669"/>
    <property type="project" value="UniProtKB-SubCell"/>
</dbReference>
<dbReference type="GO" id="GO:0016787">
    <property type="term" value="F:hydrolase activity"/>
    <property type="evidence" value="ECO:0007669"/>
    <property type="project" value="UniProtKB-KW"/>
</dbReference>
<dbReference type="GO" id="GO:0046872">
    <property type="term" value="F:metal ion binding"/>
    <property type="evidence" value="ECO:0007669"/>
    <property type="project" value="UniProtKB-KW"/>
</dbReference>
<dbReference type="GO" id="GO:0016042">
    <property type="term" value="P:lipid catabolic process"/>
    <property type="evidence" value="ECO:0007669"/>
    <property type="project" value="UniProtKB-KW"/>
</dbReference>
<dbReference type="CDD" id="cd00741">
    <property type="entry name" value="Lipase"/>
    <property type="match status" value="1"/>
</dbReference>
<dbReference type="Gene3D" id="3.40.50.1820">
    <property type="entry name" value="alpha/beta hydrolase"/>
    <property type="match status" value="1"/>
</dbReference>
<dbReference type="InterPro" id="IPR029058">
    <property type="entry name" value="AB_hydrolase_fold"/>
</dbReference>
<dbReference type="InterPro" id="IPR002921">
    <property type="entry name" value="Fungal_lipase-type"/>
</dbReference>
<dbReference type="InterPro" id="IPR051218">
    <property type="entry name" value="Sec_MonoDiacylglyc_Lipase"/>
</dbReference>
<dbReference type="PANTHER" id="PTHR45856">
    <property type="entry name" value="ALPHA/BETA-HYDROLASES SUPERFAMILY PROTEIN"/>
    <property type="match status" value="1"/>
</dbReference>
<dbReference type="PANTHER" id="PTHR45856:SF25">
    <property type="entry name" value="FUNGAL LIPASE-LIKE DOMAIN-CONTAINING PROTEIN"/>
    <property type="match status" value="1"/>
</dbReference>
<dbReference type="Pfam" id="PF01764">
    <property type="entry name" value="Lipase_3"/>
    <property type="match status" value="1"/>
</dbReference>
<dbReference type="SUPFAM" id="SSF53474">
    <property type="entry name" value="alpha/beta-Hydrolases"/>
    <property type="match status" value="1"/>
</dbReference>
<gene>
    <name evidence="6" type="primary">LIP2</name>
    <name type="ORF">DNF11_3735_2</name>
</gene>
<feature type="signal peptide" evidence="2">
    <location>
        <begin position="1"/>
        <end position="21"/>
    </location>
</feature>
<feature type="chain" id="PRO_5005453316" description="Secreted mono- and diacylglycerol lipase LIP2">
    <location>
        <begin position="22"/>
        <end position="315"/>
    </location>
</feature>
<feature type="active site" description="Nucleophile" evidence="4">
    <location>
        <position position="182"/>
    </location>
</feature>
<feature type="active site" evidence="1">
    <location>
        <position position="240"/>
    </location>
</feature>
<feature type="active site" evidence="1">
    <location>
        <position position="292"/>
    </location>
</feature>
<feature type="glycosylation site" description="N-linked (GlcNAc...) asparagine" evidence="3">
    <location>
        <position position="74"/>
    </location>
</feature>
<feature type="glycosylation site" description="N-linked (GlcNAc...) asparagine" evidence="3">
    <location>
        <position position="265"/>
    </location>
</feature>
<feature type="disulfide bond" evidence="1">
    <location>
        <begin position="68"/>
        <end position="308"/>
    </location>
</feature>